<protein>
    <recommendedName>
        <fullName evidence="3">Brevinin 2AV</fullName>
    </recommendedName>
</protein>
<evidence type="ECO:0000250" key="1">
    <source>
        <dbReference type="UniProtKB" id="P82740"/>
    </source>
</evidence>
<evidence type="ECO:0000269" key="2">
    <source>
    </source>
</evidence>
<evidence type="ECO:0000303" key="3">
    <source>
    </source>
</evidence>
<evidence type="ECO:0000305" key="4"/>
<evidence type="ECO:0000305" key="5">
    <source>
    </source>
</evidence>
<comment type="function">
    <text evidence="1">Has antibacterial activity.</text>
</comment>
<comment type="subcellular location">
    <subcellularLocation>
        <location evidence="2">Secreted</location>
    </subcellularLocation>
</comment>
<comment type="tissue specificity">
    <text evidence="2">Expressed by the skin glands.</text>
</comment>
<comment type="mass spectrometry"/>
<comment type="similarity">
    <text evidence="4">Belongs to the frog skin active peptide (FSAP) family. Brevinin subfamily.</text>
</comment>
<organism evidence="3">
    <name type="scientific">Rana arvalis</name>
    <name type="common">Moor frog</name>
    <dbReference type="NCBI Taxonomy" id="156871"/>
    <lineage>
        <taxon>Eukaryota</taxon>
        <taxon>Metazoa</taxon>
        <taxon>Chordata</taxon>
        <taxon>Craniata</taxon>
        <taxon>Vertebrata</taxon>
        <taxon>Euteleostomi</taxon>
        <taxon>Amphibia</taxon>
        <taxon>Batrachia</taxon>
        <taxon>Anura</taxon>
        <taxon>Neobatrachia</taxon>
        <taxon>Ranoidea</taxon>
        <taxon>Ranidae</taxon>
        <taxon>Rana</taxon>
        <taxon>Rana</taxon>
    </lineage>
</organism>
<reference evidence="4" key="1">
    <citation type="journal article" date="2022" name="J. Am. Soc. Mass Spectrom.">
        <title>Mass Spectrometry Differentiation between Rana arvalis Populations Based on Their Skin Peptidome Composition.</title>
        <authorList>
            <person name="Samgina T.Y."/>
            <person name="Vasileva I.D."/>
            <person name="Trebse P."/>
            <person name="Torkar G."/>
            <person name="Surin A.K."/>
            <person name="Meng Z."/>
            <person name="Zubarev R.A."/>
            <person name="Lebedev A.T."/>
        </authorList>
    </citation>
    <scope>PROTEIN SEQUENCE</scope>
    <scope>IDENTIFICATION BY MASS SPECTROMETRY</scope>
    <scope>SUBCELLULAR LOCATION</scope>
    <scope>TISSUE SPECIFICITY</scope>
    <scope>DISULFIDE BOND</scope>
    <source>
        <tissue evidence="3">Skin secretion</tissue>
    </source>
</reference>
<proteinExistence type="evidence at protein level"/>
<keyword id="KW-0878">Amphibian defense peptide</keyword>
<keyword id="KW-0044">Antibiotic</keyword>
<keyword id="KW-0929">Antimicrobial</keyword>
<keyword id="KW-0903">Direct protein sequencing</keyword>
<keyword id="KW-1015">Disulfide bond</keyword>
<keyword id="KW-0964">Secreted</keyword>
<accession>C0HM56</accession>
<sequence>GLMSVLKKAGKHVAKNVAVSLMDSLKCKISGGC</sequence>
<dbReference type="SMR" id="C0HM56"/>
<dbReference type="GO" id="GO:0005576">
    <property type="term" value="C:extracellular region"/>
    <property type="evidence" value="ECO:0000314"/>
    <property type="project" value="UniProtKB"/>
</dbReference>
<dbReference type="GO" id="GO:0042742">
    <property type="term" value="P:defense response to bacterium"/>
    <property type="evidence" value="ECO:0007669"/>
    <property type="project" value="UniProtKB-KW"/>
</dbReference>
<dbReference type="InterPro" id="IPR012521">
    <property type="entry name" value="Antimicrobial_frog_2"/>
</dbReference>
<dbReference type="Pfam" id="PF08023">
    <property type="entry name" value="Antimicrobial_2"/>
    <property type="match status" value="1"/>
</dbReference>
<name>B2AV_RANAR</name>
<feature type="peptide" id="PRO_0000457088" description="Brevinin 2AV">
    <location>
        <begin position="1"/>
        <end position="33"/>
    </location>
</feature>
<feature type="disulfide bond" evidence="2">
    <location>
        <begin position="27"/>
        <end position="33"/>
    </location>
</feature>
<feature type="unsure residue" description="L or I" evidence="5">
    <location>
        <position position="2"/>
    </location>
</feature>
<feature type="unsure residue" description="L or I" evidence="5">
    <location>
        <position position="6"/>
    </location>
</feature>
<feature type="unsure residue" description="I or L" evidence="5">
    <location>
        <position position="29"/>
    </location>
</feature>